<proteinExistence type="evidence at transcript level"/>
<gene>
    <name type="primary">gh</name>
</gene>
<accession>Q9DEV3</accession>
<comment type="function">
    <text>Growth hormone plays an important role in growth control and involved in the regulation of several anabolic processes.</text>
</comment>
<comment type="subcellular location">
    <subcellularLocation>
        <location>Secreted</location>
    </subcellularLocation>
</comment>
<comment type="similarity">
    <text evidence="2">Belongs to the somatotropin/prolactin family.</text>
</comment>
<protein>
    <recommendedName>
        <fullName>Somatotropin</fullName>
    </recommendedName>
    <alternativeName>
        <fullName>Growth hormone</fullName>
    </alternativeName>
</protein>
<organism>
    <name type="scientific">Perca flavescens</name>
    <name type="common">American yellow perch</name>
    <name type="synonym">Morone flavescens</name>
    <dbReference type="NCBI Taxonomy" id="8167"/>
    <lineage>
        <taxon>Eukaryota</taxon>
        <taxon>Metazoa</taxon>
        <taxon>Chordata</taxon>
        <taxon>Craniata</taxon>
        <taxon>Vertebrata</taxon>
        <taxon>Euteleostomi</taxon>
        <taxon>Actinopterygii</taxon>
        <taxon>Neopterygii</taxon>
        <taxon>Teleostei</taxon>
        <taxon>Neoteleostei</taxon>
        <taxon>Acanthomorphata</taxon>
        <taxon>Eupercaria</taxon>
        <taxon>Perciformes</taxon>
        <taxon>Percoidei</taxon>
        <taxon>Percidae</taxon>
        <taxon>Percinae</taxon>
        <taxon>Perca</taxon>
    </lineage>
</organism>
<sequence length="204" mass="23052">MERAVLLLSLLSLGVSSQPITDGQRLFSIAVSRVQHLHLLAQRIFSEFESSLQTEEQRQLNKIFLQDFCNSDYIISPIDKHETQRSSVLKLLSISYRLVESWEFPSRSLSGGSVSRNQISPKLSELKTGILLLIKASEDGAELFPDSSALQLAPYGNYYQSLSTDESLRRTYELLACFKKDMHKVETYLTVAKCRLSPEANCTL</sequence>
<dbReference type="EMBL" id="AY007303">
    <property type="protein sequence ID" value="AAG09621.1"/>
    <property type="molecule type" value="mRNA"/>
</dbReference>
<dbReference type="SMR" id="Q9DEV3"/>
<dbReference type="GO" id="GO:0005615">
    <property type="term" value="C:extracellular space"/>
    <property type="evidence" value="ECO:0007669"/>
    <property type="project" value="InterPro"/>
</dbReference>
<dbReference type="GO" id="GO:0070186">
    <property type="term" value="F:growth hormone activity"/>
    <property type="evidence" value="ECO:0007669"/>
    <property type="project" value="TreeGrafter"/>
</dbReference>
<dbReference type="GO" id="GO:0005131">
    <property type="term" value="F:growth hormone receptor binding"/>
    <property type="evidence" value="ECO:0007669"/>
    <property type="project" value="InterPro"/>
</dbReference>
<dbReference type="GO" id="GO:0046872">
    <property type="term" value="F:metal ion binding"/>
    <property type="evidence" value="ECO:0007669"/>
    <property type="project" value="UniProtKB-KW"/>
</dbReference>
<dbReference type="GO" id="GO:0048513">
    <property type="term" value="P:animal organ development"/>
    <property type="evidence" value="ECO:0007669"/>
    <property type="project" value="TreeGrafter"/>
</dbReference>
<dbReference type="GO" id="GO:0060396">
    <property type="term" value="P:growth hormone receptor signaling pathway"/>
    <property type="evidence" value="ECO:0007669"/>
    <property type="project" value="TreeGrafter"/>
</dbReference>
<dbReference type="GO" id="GO:0045927">
    <property type="term" value="P:positive regulation of growth"/>
    <property type="evidence" value="ECO:0007669"/>
    <property type="project" value="TreeGrafter"/>
</dbReference>
<dbReference type="GO" id="GO:0046427">
    <property type="term" value="P:positive regulation of receptor signaling pathway via JAK-STAT"/>
    <property type="evidence" value="ECO:0007669"/>
    <property type="project" value="TreeGrafter"/>
</dbReference>
<dbReference type="GO" id="GO:0031667">
    <property type="term" value="P:response to nutrient levels"/>
    <property type="evidence" value="ECO:0007669"/>
    <property type="project" value="TreeGrafter"/>
</dbReference>
<dbReference type="CDD" id="cd10285">
    <property type="entry name" value="somatotropin_like"/>
    <property type="match status" value="1"/>
</dbReference>
<dbReference type="FunFam" id="1.20.1250.10:FF:000009">
    <property type="entry name" value="Growth hormone"/>
    <property type="match status" value="1"/>
</dbReference>
<dbReference type="Gene3D" id="1.20.1250.10">
    <property type="match status" value="1"/>
</dbReference>
<dbReference type="InterPro" id="IPR009079">
    <property type="entry name" value="4_helix_cytokine-like_core"/>
</dbReference>
<dbReference type="InterPro" id="IPR034975">
    <property type="entry name" value="Somatotropin"/>
</dbReference>
<dbReference type="InterPro" id="IPR001400">
    <property type="entry name" value="Somatotropin/Prolactin"/>
</dbReference>
<dbReference type="InterPro" id="IPR018116">
    <property type="entry name" value="Somatotropin_CS"/>
</dbReference>
<dbReference type="PANTHER" id="PTHR11417:SF2">
    <property type="entry name" value="SOMATOTROPIN"/>
    <property type="match status" value="1"/>
</dbReference>
<dbReference type="PANTHER" id="PTHR11417">
    <property type="entry name" value="SOMATOTROPIN,PROLACTIN"/>
    <property type="match status" value="1"/>
</dbReference>
<dbReference type="Pfam" id="PF00103">
    <property type="entry name" value="Hormone_1"/>
    <property type="match status" value="1"/>
</dbReference>
<dbReference type="PRINTS" id="PR00836">
    <property type="entry name" value="SOMATOTROPIN"/>
</dbReference>
<dbReference type="SUPFAM" id="SSF47266">
    <property type="entry name" value="4-helical cytokines"/>
    <property type="match status" value="1"/>
</dbReference>
<dbReference type="PROSITE" id="PS00266">
    <property type="entry name" value="SOMATOTROPIN_1"/>
    <property type="match status" value="1"/>
</dbReference>
<dbReference type="PROSITE" id="PS00338">
    <property type="entry name" value="SOMATOTROPIN_2"/>
    <property type="match status" value="1"/>
</dbReference>
<name>SOMA_PERFV</name>
<feature type="signal peptide" evidence="1">
    <location>
        <begin position="1"/>
        <end position="17"/>
    </location>
</feature>
<feature type="chain" id="PRO_0000033048" description="Somatotropin">
    <location>
        <begin position="18"/>
        <end position="204"/>
    </location>
</feature>
<feature type="binding site" evidence="1">
    <location>
        <position position="36"/>
    </location>
    <ligand>
        <name>Zn(2+)</name>
        <dbReference type="ChEBI" id="CHEBI:29105"/>
    </ligand>
</feature>
<feature type="binding site" evidence="1">
    <location>
        <position position="186"/>
    </location>
    <ligand>
        <name>Zn(2+)</name>
        <dbReference type="ChEBI" id="CHEBI:29105"/>
    </ligand>
</feature>
<feature type="modified residue" description="Pyrrolidone carboxylic acid" evidence="1">
    <location>
        <position position="18"/>
    </location>
</feature>
<feature type="disulfide bond" evidence="1">
    <location>
        <begin position="69"/>
        <end position="177"/>
    </location>
</feature>
<feature type="disulfide bond" evidence="1">
    <location>
        <begin position="194"/>
        <end position="202"/>
    </location>
</feature>
<evidence type="ECO:0000250" key="1"/>
<evidence type="ECO:0000305" key="2"/>
<keyword id="KW-1015">Disulfide bond</keyword>
<keyword id="KW-0372">Hormone</keyword>
<keyword id="KW-0479">Metal-binding</keyword>
<keyword id="KW-0873">Pyrrolidone carboxylic acid</keyword>
<keyword id="KW-0964">Secreted</keyword>
<keyword id="KW-0732">Signal</keyword>
<keyword id="KW-0862">Zinc</keyword>
<reference key="1">
    <citation type="submission" date="2000-08" db="EMBL/GenBank/DDBJ databases">
        <title>Cloning of growth hormone from yellow perch.</title>
        <authorList>
            <person name="Roberts S.B."/>
            <person name="Goetz F.W."/>
        </authorList>
    </citation>
    <scope>NUCLEOTIDE SEQUENCE [MRNA]</scope>
</reference>